<dbReference type="EMBL" id="AP006861">
    <property type="protein sequence ID" value="BAE81100.1"/>
    <property type="molecule type" value="Genomic_DNA"/>
</dbReference>
<dbReference type="RefSeq" id="WP_011457880.1">
    <property type="nucleotide sequence ID" value="NC_007899.1"/>
</dbReference>
<dbReference type="SMR" id="Q255D8"/>
<dbReference type="STRING" id="264202.CF0328"/>
<dbReference type="KEGG" id="cfe:CF0328"/>
<dbReference type="eggNOG" id="COG1156">
    <property type="taxonomic scope" value="Bacteria"/>
</dbReference>
<dbReference type="HOGENOM" id="CLU_022916_2_0_0"/>
<dbReference type="OrthoDB" id="9802718at2"/>
<dbReference type="Proteomes" id="UP000001260">
    <property type="component" value="Chromosome"/>
</dbReference>
<dbReference type="GO" id="GO:0005524">
    <property type="term" value="F:ATP binding"/>
    <property type="evidence" value="ECO:0007669"/>
    <property type="project" value="UniProtKB-UniRule"/>
</dbReference>
<dbReference type="GO" id="GO:0046933">
    <property type="term" value="F:proton-transporting ATP synthase activity, rotational mechanism"/>
    <property type="evidence" value="ECO:0007669"/>
    <property type="project" value="UniProtKB-UniRule"/>
</dbReference>
<dbReference type="GO" id="GO:0042777">
    <property type="term" value="P:proton motive force-driven plasma membrane ATP synthesis"/>
    <property type="evidence" value="ECO:0007669"/>
    <property type="project" value="UniProtKB-UniRule"/>
</dbReference>
<dbReference type="CDD" id="cd18118">
    <property type="entry name" value="ATP-synt_V_A-type_beta_N"/>
    <property type="match status" value="1"/>
</dbReference>
<dbReference type="CDD" id="cd01135">
    <property type="entry name" value="V_A-ATPase_B"/>
    <property type="match status" value="1"/>
</dbReference>
<dbReference type="Gene3D" id="3.40.50.12240">
    <property type="match status" value="1"/>
</dbReference>
<dbReference type="HAMAP" id="MF_00310">
    <property type="entry name" value="ATP_synth_B_arch"/>
    <property type="match status" value="1"/>
</dbReference>
<dbReference type="InterPro" id="IPR055190">
    <property type="entry name" value="ATP-synt_VA_C"/>
</dbReference>
<dbReference type="InterPro" id="IPR004100">
    <property type="entry name" value="ATPase_F1/V1/A1_a/bsu_N"/>
</dbReference>
<dbReference type="InterPro" id="IPR000194">
    <property type="entry name" value="ATPase_F1/V1/A1_a/bsu_nucl-bd"/>
</dbReference>
<dbReference type="InterPro" id="IPR027417">
    <property type="entry name" value="P-loop_NTPase"/>
</dbReference>
<dbReference type="InterPro" id="IPR022879">
    <property type="entry name" value="V-ATPase_su_B/beta"/>
</dbReference>
<dbReference type="NCBIfam" id="NF002555">
    <property type="entry name" value="PRK02118.1"/>
    <property type="match status" value="1"/>
</dbReference>
<dbReference type="NCBIfam" id="NF003235">
    <property type="entry name" value="PRK04196.1"/>
    <property type="match status" value="1"/>
</dbReference>
<dbReference type="PANTHER" id="PTHR43389">
    <property type="entry name" value="V-TYPE PROTON ATPASE SUBUNIT B"/>
    <property type="match status" value="1"/>
</dbReference>
<dbReference type="PANTHER" id="PTHR43389:SF4">
    <property type="entry name" value="V-TYPE PROTON ATPASE SUBUNIT B"/>
    <property type="match status" value="1"/>
</dbReference>
<dbReference type="Pfam" id="PF00006">
    <property type="entry name" value="ATP-synt_ab"/>
    <property type="match status" value="1"/>
</dbReference>
<dbReference type="Pfam" id="PF02874">
    <property type="entry name" value="ATP-synt_ab_N"/>
    <property type="match status" value="1"/>
</dbReference>
<dbReference type="Pfam" id="PF22919">
    <property type="entry name" value="ATP-synt_VA_C"/>
    <property type="match status" value="1"/>
</dbReference>
<dbReference type="SUPFAM" id="SSF52540">
    <property type="entry name" value="P-loop containing nucleoside triphosphate hydrolases"/>
    <property type="match status" value="1"/>
</dbReference>
<evidence type="ECO:0000255" key="1">
    <source>
        <dbReference type="HAMAP-Rule" id="MF_00310"/>
    </source>
</evidence>
<comment type="function">
    <text evidence="1">Produces ATP from ADP in the presence of a proton gradient across the membrane. The V-type beta chain is a regulatory subunit.</text>
</comment>
<comment type="similarity">
    <text evidence="1">Belongs to the ATPase alpha/beta chains family.</text>
</comment>
<reference key="1">
    <citation type="journal article" date="2006" name="DNA Res.">
        <title>Genome sequence of the cat pathogen, Chlamydophila felis.</title>
        <authorList>
            <person name="Azuma Y."/>
            <person name="Hirakawa H."/>
            <person name="Yamashita A."/>
            <person name="Cai Y."/>
            <person name="Rahman M.A."/>
            <person name="Suzuki H."/>
            <person name="Mitaku S."/>
            <person name="Toh H."/>
            <person name="Goto S."/>
            <person name="Murakami T."/>
            <person name="Sugi K."/>
            <person name="Hayashi H."/>
            <person name="Fukushi H."/>
            <person name="Hattori M."/>
            <person name="Kuhara S."/>
            <person name="Shirai M."/>
        </authorList>
    </citation>
    <scope>NUCLEOTIDE SEQUENCE [LARGE SCALE GENOMIC DNA]</scope>
    <source>
        <strain>Fe/C-56</strain>
    </source>
</reference>
<organism>
    <name type="scientific">Chlamydia felis (strain Fe/C-56)</name>
    <name type="common">Chlamydophila felis</name>
    <dbReference type="NCBI Taxonomy" id="264202"/>
    <lineage>
        <taxon>Bacteria</taxon>
        <taxon>Pseudomonadati</taxon>
        <taxon>Chlamydiota</taxon>
        <taxon>Chlamydiia</taxon>
        <taxon>Chlamydiales</taxon>
        <taxon>Chlamydiaceae</taxon>
        <taxon>Chlamydia/Chlamydophila group</taxon>
        <taxon>Chlamydia</taxon>
    </lineage>
</organism>
<name>VATB_CHLFF</name>
<feature type="chain" id="PRO_1000059368" description="V-type ATP synthase beta chain">
    <location>
        <begin position="1"/>
        <end position="438"/>
    </location>
</feature>
<keyword id="KW-0066">ATP synthesis</keyword>
<keyword id="KW-0375">Hydrogen ion transport</keyword>
<keyword id="KW-0406">Ion transport</keyword>
<keyword id="KW-0813">Transport</keyword>
<proteinExistence type="inferred from homology"/>
<accession>Q255D8</accession>
<gene>
    <name evidence="1" type="primary">atpB</name>
    <name type="ordered locus">CF0328</name>
</gene>
<protein>
    <recommendedName>
        <fullName evidence="1">V-type ATP synthase beta chain</fullName>
    </recommendedName>
    <alternativeName>
        <fullName evidence="1">V-ATPase subunit B</fullName>
    </alternativeName>
</protein>
<sequence length="438" mass="48377">MQTIYTKITDIKGNLITVEAEGARLGELAEIERVDGRSSYASVLRFDAKKVTLQVFGGTSGLSTGDRVIFLGRAMEVTYGESLIGRRLSGIGKPIDGEGECFGDPIAISTPTFNPVCRIVPRDMVRTNIPMIDMFNCLVKSQKIPIFSSSGENHNALLMRIAAQTDADIVIIGGMGLTFVDYSFFVEESKRLGFSDKCVMFIHKAVDAPVECVLIPDMALACAEKFAVDHNKNVLVLLTDMTAFADALKEIAITMDQIPANRGYPGSLYSDLALRYEKAVDIAKGGSITLISVTTMPGDDITHPVPDNTGFITEGQFYLKNNRIDPFGSLSRLKQLVIGKVTREDHGDLANSLIRLYADSRKAAERMAMGFKLSNWDKKLLAFAELFETRLMSLEVNIPLEEALDIGWKILAQSFHSEEVGIKEQLINKYWPKSCLHR</sequence>